<proteinExistence type="inferred from homology"/>
<evidence type="ECO:0000255" key="1">
    <source>
        <dbReference type="HAMAP-Rule" id="MF_00362"/>
    </source>
</evidence>
<evidence type="ECO:0000305" key="2"/>
<gene>
    <name evidence="1" type="primary">rplJ</name>
    <name type="ordered locus">Pden_0745</name>
</gene>
<dbReference type="EMBL" id="CP000489">
    <property type="protein sequence ID" value="ABL68857.1"/>
    <property type="molecule type" value="Genomic_DNA"/>
</dbReference>
<dbReference type="RefSeq" id="WP_011747090.1">
    <property type="nucleotide sequence ID" value="NC_008686.1"/>
</dbReference>
<dbReference type="SMR" id="A1B013"/>
<dbReference type="STRING" id="318586.Pden_0745"/>
<dbReference type="EnsemblBacteria" id="ABL68857">
    <property type="protein sequence ID" value="ABL68857"/>
    <property type="gene ID" value="Pden_0745"/>
</dbReference>
<dbReference type="GeneID" id="93451969"/>
<dbReference type="KEGG" id="pde:Pden_0745"/>
<dbReference type="eggNOG" id="COG0244">
    <property type="taxonomic scope" value="Bacteria"/>
</dbReference>
<dbReference type="HOGENOM" id="CLU_092227_0_0_5"/>
<dbReference type="OrthoDB" id="9791972at2"/>
<dbReference type="Proteomes" id="UP000000361">
    <property type="component" value="Chromosome 1"/>
</dbReference>
<dbReference type="GO" id="GO:0015934">
    <property type="term" value="C:large ribosomal subunit"/>
    <property type="evidence" value="ECO:0007669"/>
    <property type="project" value="InterPro"/>
</dbReference>
<dbReference type="GO" id="GO:0070180">
    <property type="term" value="F:large ribosomal subunit rRNA binding"/>
    <property type="evidence" value="ECO:0007669"/>
    <property type="project" value="UniProtKB-UniRule"/>
</dbReference>
<dbReference type="GO" id="GO:0003735">
    <property type="term" value="F:structural constituent of ribosome"/>
    <property type="evidence" value="ECO:0007669"/>
    <property type="project" value="InterPro"/>
</dbReference>
<dbReference type="GO" id="GO:0006412">
    <property type="term" value="P:translation"/>
    <property type="evidence" value="ECO:0007669"/>
    <property type="project" value="UniProtKB-UniRule"/>
</dbReference>
<dbReference type="CDD" id="cd05797">
    <property type="entry name" value="Ribosomal_L10"/>
    <property type="match status" value="1"/>
</dbReference>
<dbReference type="Gene3D" id="3.30.70.1730">
    <property type="match status" value="1"/>
</dbReference>
<dbReference type="Gene3D" id="6.10.250.290">
    <property type="match status" value="1"/>
</dbReference>
<dbReference type="HAMAP" id="MF_00362">
    <property type="entry name" value="Ribosomal_uL10"/>
    <property type="match status" value="1"/>
</dbReference>
<dbReference type="InterPro" id="IPR001790">
    <property type="entry name" value="Ribosomal_uL10"/>
</dbReference>
<dbReference type="InterPro" id="IPR043141">
    <property type="entry name" value="Ribosomal_uL10-like_sf"/>
</dbReference>
<dbReference type="InterPro" id="IPR022973">
    <property type="entry name" value="Ribosomal_uL10_bac"/>
</dbReference>
<dbReference type="InterPro" id="IPR047865">
    <property type="entry name" value="Ribosomal_uL10_bac_type"/>
</dbReference>
<dbReference type="InterPro" id="IPR002363">
    <property type="entry name" value="Ribosomal_uL10_CS_bac"/>
</dbReference>
<dbReference type="NCBIfam" id="NF000955">
    <property type="entry name" value="PRK00099.1-1"/>
    <property type="match status" value="1"/>
</dbReference>
<dbReference type="PANTHER" id="PTHR11560">
    <property type="entry name" value="39S RIBOSOMAL PROTEIN L10, MITOCHONDRIAL"/>
    <property type="match status" value="1"/>
</dbReference>
<dbReference type="Pfam" id="PF00466">
    <property type="entry name" value="Ribosomal_L10"/>
    <property type="match status" value="1"/>
</dbReference>
<dbReference type="SUPFAM" id="SSF160369">
    <property type="entry name" value="Ribosomal protein L10-like"/>
    <property type="match status" value="1"/>
</dbReference>
<dbReference type="PROSITE" id="PS01109">
    <property type="entry name" value="RIBOSOMAL_L10"/>
    <property type="match status" value="1"/>
</dbReference>
<sequence length="171" mass="17564">MDRAQKEQVVEELGQIFDASGVVVVARYEGMTVAEMQDLRAQMRDAGGSVRVAKNRLAKIALDGKPCASIADYLTGMTVLAFSDDPVAAAKVADKYAKGNDKFVILGGAMGDTALDPAGVKAVAQMPSREELIASIVACIGAPASNIAGAIGAPASNIAGILATLEEREAA</sequence>
<protein>
    <recommendedName>
        <fullName evidence="1">Large ribosomal subunit protein uL10</fullName>
    </recommendedName>
    <alternativeName>
        <fullName evidence="2">50S ribosomal protein L10</fullName>
    </alternativeName>
</protein>
<organism>
    <name type="scientific">Paracoccus denitrificans (strain Pd 1222)</name>
    <dbReference type="NCBI Taxonomy" id="318586"/>
    <lineage>
        <taxon>Bacteria</taxon>
        <taxon>Pseudomonadati</taxon>
        <taxon>Pseudomonadota</taxon>
        <taxon>Alphaproteobacteria</taxon>
        <taxon>Rhodobacterales</taxon>
        <taxon>Paracoccaceae</taxon>
        <taxon>Paracoccus</taxon>
    </lineage>
</organism>
<comment type="function">
    <text evidence="1">Forms part of the ribosomal stalk, playing a central role in the interaction of the ribosome with GTP-bound translation factors.</text>
</comment>
<comment type="subunit">
    <text evidence="1">Part of the ribosomal stalk of the 50S ribosomal subunit. The N-terminus interacts with L11 and the large rRNA to form the base of the stalk. The C-terminus forms an elongated spine to which L12 dimers bind in a sequential fashion forming a multimeric L10(L12)X complex.</text>
</comment>
<comment type="similarity">
    <text evidence="1">Belongs to the universal ribosomal protein uL10 family.</text>
</comment>
<reference key="1">
    <citation type="submission" date="2006-12" db="EMBL/GenBank/DDBJ databases">
        <title>Complete sequence of chromosome 1 of Paracoccus denitrificans PD1222.</title>
        <authorList>
            <person name="Copeland A."/>
            <person name="Lucas S."/>
            <person name="Lapidus A."/>
            <person name="Barry K."/>
            <person name="Detter J.C."/>
            <person name="Glavina del Rio T."/>
            <person name="Hammon N."/>
            <person name="Israni S."/>
            <person name="Dalin E."/>
            <person name="Tice H."/>
            <person name="Pitluck S."/>
            <person name="Munk A.C."/>
            <person name="Brettin T."/>
            <person name="Bruce D."/>
            <person name="Han C."/>
            <person name="Tapia R."/>
            <person name="Gilna P."/>
            <person name="Schmutz J."/>
            <person name="Larimer F."/>
            <person name="Land M."/>
            <person name="Hauser L."/>
            <person name="Kyrpides N."/>
            <person name="Lykidis A."/>
            <person name="Spiro S."/>
            <person name="Richardson D.J."/>
            <person name="Moir J.W.B."/>
            <person name="Ferguson S.J."/>
            <person name="van Spanning R.J.M."/>
            <person name="Richardson P."/>
        </authorList>
    </citation>
    <scope>NUCLEOTIDE SEQUENCE [LARGE SCALE GENOMIC DNA]</scope>
    <source>
        <strain>Pd 1222</strain>
    </source>
</reference>
<feature type="chain" id="PRO_1000005550" description="Large ribosomal subunit protein uL10">
    <location>
        <begin position="1"/>
        <end position="171"/>
    </location>
</feature>
<keyword id="KW-1185">Reference proteome</keyword>
<keyword id="KW-0687">Ribonucleoprotein</keyword>
<keyword id="KW-0689">Ribosomal protein</keyword>
<keyword id="KW-0694">RNA-binding</keyword>
<keyword id="KW-0699">rRNA-binding</keyword>
<name>RL10_PARDP</name>
<accession>A1B013</accession>